<dbReference type="EMBL" id="CP000305">
    <property type="protein sequence ID" value="ABG17949.1"/>
    <property type="molecule type" value="Genomic_DNA"/>
</dbReference>
<dbReference type="EMBL" id="ACNQ01000009">
    <property type="protein sequence ID" value="EEO77068.1"/>
    <property type="molecule type" value="Genomic_DNA"/>
</dbReference>
<dbReference type="RefSeq" id="WP_002216501.1">
    <property type="nucleotide sequence ID" value="NZ_ACNQ01000009.1"/>
</dbReference>
<dbReference type="SMR" id="Q1CJ81"/>
<dbReference type="KEGG" id="ypn:YPN_1619"/>
<dbReference type="HOGENOM" id="CLU_049702_0_0_6"/>
<dbReference type="Proteomes" id="UP000008936">
    <property type="component" value="Chromosome"/>
</dbReference>
<dbReference type="HAMAP" id="MF_01232">
    <property type="entry name" value="UPF0229"/>
    <property type="match status" value="1"/>
</dbReference>
<dbReference type="InterPro" id="IPR006698">
    <property type="entry name" value="UPF0229"/>
</dbReference>
<dbReference type="NCBIfam" id="NF003707">
    <property type="entry name" value="PRK05325.1-2"/>
    <property type="match status" value="1"/>
</dbReference>
<dbReference type="NCBIfam" id="NF003708">
    <property type="entry name" value="PRK05325.1-3"/>
    <property type="match status" value="1"/>
</dbReference>
<dbReference type="PANTHER" id="PTHR30510">
    <property type="entry name" value="UPF0229 PROTEIN YEAH"/>
    <property type="match status" value="1"/>
</dbReference>
<dbReference type="PANTHER" id="PTHR30510:SF2">
    <property type="entry name" value="UPF0229 PROTEIN YEAH"/>
    <property type="match status" value="1"/>
</dbReference>
<dbReference type="Pfam" id="PF04285">
    <property type="entry name" value="DUF444"/>
    <property type="match status" value="1"/>
</dbReference>
<organism>
    <name type="scientific">Yersinia pestis bv. Antiqua (strain Nepal516)</name>
    <dbReference type="NCBI Taxonomy" id="377628"/>
    <lineage>
        <taxon>Bacteria</taxon>
        <taxon>Pseudomonadati</taxon>
        <taxon>Pseudomonadota</taxon>
        <taxon>Gammaproteobacteria</taxon>
        <taxon>Enterobacterales</taxon>
        <taxon>Yersiniaceae</taxon>
        <taxon>Yersinia</taxon>
    </lineage>
</organism>
<evidence type="ECO:0000255" key="1">
    <source>
        <dbReference type="HAMAP-Rule" id="MF_01232"/>
    </source>
</evidence>
<evidence type="ECO:0000256" key="2">
    <source>
        <dbReference type="SAM" id="MobiDB-lite"/>
    </source>
</evidence>
<name>Y1619_YERPN</name>
<gene>
    <name type="ordered locus">YPN_1619</name>
    <name type="ORF">YP516_1802</name>
</gene>
<sequence>MGYFIDRRLNGKNKSMVNRQRFLRRYKSQIKQSIADAINKRSVTDIESGESVSIPIDDINEPMFHQGNGGLRHRVHPGNDHFITNDRVDRPQGGGGGGSGQGNAGKDGEGEDEFVFQISKDEYLDLLFEDLALPNLKRNQYKQLAEFKTHRAGYTSNGVPANISVVRSLQNSLARRTAMTASKRRELRELEAALTVLENSEPAQLLEEERLRKAITELKQKIARVPFIDTFDLRYKNYERRPEPSSQAVMFCLMDVSGSMDQATKDMAKRFYILLYLFLSRTYKNVDVVYIRHHTQAKEVDEQEFFYSQETGGTIVSSALKLMDEVVQERYNPAQWNIYAAQASDGDNWADDSPLCHELLAKKILPVVRYYSYIEITRRAHQTLWREYEDLEEKFDNFAIQHIREPEDIYPVFRELFHKQTVDN</sequence>
<protein>
    <recommendedName>
        <fullName evidence="1">UPF0229 protein YPN_1619</fullName>
    </recommendedName>
</protein>
<comment type="similarity">
    <text evidence="1">Belongs to the UPF0229 family.</text>
</comment>
<feature type="chain" id="PRO_1000066889" description="UPF0229 protein YPN_1619">
    <location>
        <begin position="1"/>
        <end position="424"/>
    </location>
</feature>
<feature type="region of interest" description="Disordered" evidence="2">
    <location>
        <begin position="84"/>
        <end position="109"/>
    </location>
</feature>
<feature type="compositionally biased region" description="Gly residues" evidence="2">
    <location>
        <begin position="92"/>
        <end position="105"/>
    </location>
</feature>
<accession>Q1CJ81</accession>
<accession>C4GSQ8</accession>
<proteinExistence type="inferred from homology"/>
<reference key="1">
    <citation type="journal article" date="2006" name="J. Bacteriol.">
        <title>Complete genome sequence of Yersinia pestis strains Antiqua and Nepal516: evidence of gene reduction in an emerging pathogen.</title>
        <authorList>
            <person name="Chain P.S.G."/>
            <person name="Hu P."/>
            <person name="Malfatti S.A."/>
            <person name="Radnedge L."/>
            <person name="Larimer F."/>
            <person name="Vergez L.M."/>
            <person name="Worsham P."/>
            <person name="Chu M.C."/>
            <person name="Andersen G.L."/>
        </authorList>
    </citation>
    <scope>NUCLEOTIDE SEQUENCE [LARGE SCALE GENOMIC DNA]</scope>
    <source>
        <strain>Nepal516</strain>
    </source>
</reference>
<reference key="2">
    <citation type="submission" date="2009-04" db="EMBL/GenBank/DDBJ databases">
        <title>Yersinia pestis Nepal516A whole genome shotgun sequencing project.</title>
        <authorList>
            <person name="Plunkett G. III"/>
            <person name="Anderson B.D."/>
            <person name="Baumler D.J."/>
            <person name="Burland V."/>
            <person name="Cabot E.L."/>
            <person name="Glasner J.D."/>
            <person name="Mau B."/>
            <person name="Neeno-Eckwall E."/>
            <person name="Perna N.T."/>
            <person name="Munk A.C."/>
            <person name="Tapia R."/>
            <person name="Green L.D."/>
            <person name="Rogers Y.C."/>
            <person name="Detter J.C."/>
            <person name="Bruce D.C."/>
            <person name="Brettin T.S."/>
        </authorList>
    </citation>
    <scope>NUCLEOTIDE SEQUENCE [LARGE SCALE GENOMIC DNA]</scope>
    <source>
        <strain>Nepal516</strain>
    </source>
</reference>